<feature type="chain" id="PRO_0000263959" description="Argininosuccinate synthase">
    <location>
        <begin position="1"/>
        <end position="412"/>
    </location>
</feature>
<feature type="binding site" evidence="1">
    <location>
        <begin position="15"/>
        <end position="23"/>
    </location>
    <ligand>
        <name>ATP</name>
        <dbReference type="ChEBI" id="CHEBI:30616"/>
    </ligand>
</feature>
<feature type="binding site" evidence="1">
    <location>
        <position position="42"/>
    </location>
    <ligand>
        <name>ATP</name>
        <dbReference type="ChEBI" id="CHEBI:30616"/>
    </ligand>
</feature>
<feature type="binding site" evidence="1">
    <location>
        <position position="93"/>
    </location>
    <ligand>
        <name>L-citrulline</name>
        <dbReference type="ChEBI" id="CHEBI:57743"/>
    </ligand>
</feature>
<feature type="binding site" evidence="1">
    <location>
        <position position="98"/>
    </location>
    <ligand>
        <name>L-citrulline</name>
        <dbReference type="ChEBI" id="CHEBI:57743"/>
    </ligand>
</feature>
<feature type="binding site" evidence="1">
    <location>
        <position position="123"/>
    </location>
    <ligand>
        <name>ATP</name>
        <dbReference type="ChEBI" id="CHEBI:30616"/>
    </ligand>
</feature>
<feature type="binding site" evidence="1">
    <location>
        <position position="125"/>
    </location>
    <ligand>
        <name>L-aspartate</name>
        <dbReference type="ChEBI" id="CHEBI:29991"/>
    </ligand>
</feature>
<feature type="binding site" evidence="1">
    <location>
        <position position="129"/>
    </location>
    <ligand>
        <name>L-aspartate</name>
        <dbReference type="ChEBI" id="CHEBI:29991"/>
    </ligand>
</feature>
<feature type="binding site" evidence="1">
    <location>
        <position position="129"/>
    </location>
    <ligand>
        <name>L-citrulline</name>
        <dbReference type="ChEBI" id="CHEBI:57743"/>
    </ligand>
</feature>
<feature type="binding site" evidence="1">
    <location>
        <position position="130"/>
    </location>
    <ligand>
        <name>L-aspartate</name>
        <dbReference type="ChEBI" id="CHEBI:29991"/>
    </ligand>
</feature>
<feature type="binding site" evidence="1">
    <location>
        <position position="133"/>
    </location>
    <ligand>
        <name>L-citrulline</name>
        <dbReference type="ChEBI" id="CHEBI:57743"/>
    </ligand>
</feature>
<feature type="binding site" evidence="1">
    <location>
        <position position="185"/>
    </location>
    <ligand>
        <name>L-citrulline</name>
        <dbReference type="ChEBI" id="CHEBI:57743"/>
    </ligand>
</feature>
<feature type="binding site" evidence="1">
    <location>
        <position position="194"/>
    </location>
    <ligand>
        <name>L-citrulline</name>
        <dbReference type="ChEBI" id="CHEBI:57743"/>
    </ligand>
</feature>
<feature type="binding site" evidence="1">
    <location>
        <position position="270"/>
    </location>
    <ligand>
        <name>L-citrulline</name>
        <dbReference type="ChEBI" id="CHEBI:57743"/>
    </ligand>
</feature>
<feature type="binding site" evidence="1">
    <location>
        <position position="282"/>
    </location>
    <ligand>
        <name>L-citrulline</name>
        <dbReference type="ChEBI" id="CHEBI:57743"/>
    </ligand>
</feature>
<reference key="1">
    <citation type="submission" date="2006-03" db="EMBL/GenBank/DDBJ databases">
        <title>Complete sequence of chromosome of Psychrobacter cryohalolentis K5.</title>
        <authorList>
            <consortium name="US DOE Joint Genome Institute"/>
            <person name="Copeland A."/>
            <person name="Lucas S."/>
            <person name="Lapidus A."/>
            <person name="Barry K."/>
            <person name="Detter J.C."/>
            <person name="Glavina T."/>
            <person name="Hammon N."/>
            <person name="Israni S."/>
            <person name="Dalin E."/>
            <person name="Tice H."/>
            <person name="Pitluck S."/>
            <person name="Brettin T."/>
            <person name="Bruce D."/>
            <person name="Han C."/>
            <person name="Tapia R."/>
            <person name="Sims D.R."/>
            <person name="Gilna P."/>
            <person name="Schmutz J."/>
            <person name="Larimer F."/>
            <person name="Land M."/>
            <person name="Hauser L."/>
            <person name="Kyrpides N."/>
            <person name="Kim E."/>
            <person name="Richardson P."/>
        </authorList>
    </citation>
    <scope>NUCLEOTIDE SEQUENCE [LARGE SCALE GENOMIC DNA]</scope>
    <source>
        <strain>ATCC BAA-1226 / DSM 17306 / VKM B-2378 / K5</strain>
    </source>
</reference>
<evidence type="ECO:0000255" key="1">
    <source>
        <dbReference type="HAMAP-Rule" id="MF_00005"/>
    </source>
</evidence>
<sequence length="412" mass="46244">MAQLDPKTINKIVLAYSGGLDTSIIARWLQETYDAEVITFTADIGQGEEVEPARAKAEAMGIKHIHIEDLREEFARDYVFPMFRANAIYEGEYLLGTSIARPLIAKRLVEIAKEHNADAISHGATGKGNDQVRFELGAVALSPDVVTIAPWREWDLSSRESLMEYAKEHNIAIDYAGNKKKSPYSMDANLLHISYEGGILEDPYAEAEDDMWRWSVSPEEAPDEAQYLELEYEKGDIVAIDGEALKPYEVMIKLNEIGGKHGIGRLDIVENRYVGMKSRGCYETPAGTIMLKAHRGIESLTLDREAAHLKDELMPRYAKTIYNGYWFSPERMMLQALIDKSQEYVNGTVRVKLYKGAVSVVGRKSDDSLFDEKIATFEDDAGAYDQKDAEGFIRLNGLRLAIEASRGRDLSK</sequence>
<protein>
    <recommendedName>
        <fullName evidence="1">Argininosuccinate synthase</fullName>
        <ecNumber evidence="1">6.3.4.5</ecNumber>
    </recommendedName>
    <alternativeName>
        <fullName evidence="1">Citrulline--aspartate ligase</fullName>
    </alternativeName>
</protein>
<dbReference type="EC" id="6.3.4.5" evidence="1"/>
<dbReference type="EMBL" id="CP000323">
    <property type="protein sequence ID" value="ABE75641.1"/>
    <property type="molecule type" value="Genomic_DNA"/>
</dbReference>
<dbReference type="RefSeq" id="WP_011514184.1">
    <property type="nucleotide sequence ID" value="NC_007969.1"/>
</dbReference>
<dbReference type="SMR" id="Q1Q9L2"/>
<dbReference type="STRING" id="335284.Pcryo_1864"/>
<dbReference type="KEGG" id="pcr:Pcryo_1864"/>
<dbReference type="eggNOG" id="COG0137">
    <property type="taxonomic scope" value="Bacteria"/>
</dbReference>
<dbReference type="HOGENOM" id="CLU_032784_4_2_6"/>
<dbReference type="UniPathway" id="UPA00068">
    <property type="reaction ID" value="UER00113"/>
</dbReference>
<dbReference type="Proteomes" id="UP000002425">
    <property type="component" value="Chromosome"/>
</dbReference>
<dbReference type="GO" id="GO:0005737">
    <property type="term" value="C:cytoplasm"/>
    <property type="evidence" value="ECO:0007669"/>
    <property type="project" value="UniProtKB-SubCell"/>
</dbReference>
<dbReference type="GO" id="GO:0004055">
    <property type="term" value="F:argininosuccinate synthase activity"/>
    <property type="evidence" value="ECO:0007669"/>
    <property type="project" value="UniProtKB-UniRule"/>
</dbReference>
<dbReference type="GO" id="GO:0005524">
    <property type="term" value="F:ATP binding"/>
    <property type="evidence" value="ECO:0007669"/>
    <property type="project" value="UniProtKB-UniRule"/>
</dbReference>
<dbReference type="GO" id="GO:0000053">
    <property type="term" value="P:argininosuccinate metabolic process"/>
    <property type="evidence" value="ECO:0007669"/>
    <property type="project" value="TreeGrafter"/>
</dbReference>
<dbReference type="GO" id="GO:0006526">
    <property type="term" value="P:L-arginine biosynthetic process"/>
    <property type="evidence" value="ECO:0007669"/>
    <property type="project" value="UniProtKB-UniRule"/>
</dbReference>
<dbReference type="GO" id="GO:0000050">
    <property type="term" value="P:urea cycle"/>
    <property type="evidence" value="ECO:0007669"/>
    <property type="project" value="TreeGrafter"/>
</dbReference>
<dbReference type="CDD" id="cd01999">
    <property type="entry name" value="ASS"/>
    <property type="match status" value="1"/>
</dbReference>
<dbReference type="FunFam" id="3.40.50.620:FF:000019">
    <property type="entry name" value="Argininosuccinate synthase"/>
    <property type="match status" value="1"/>
</dbReference>
<dbReference type="FunFam" id="3.90.1260.10:FF:000007">
    <property type="entry name" value="Argininosuccinate synthase"/>
    <property type="match status" value="1"/>
</dbReference>
<dbReference type="Gene3D" id="3.90.1260.10">
    <property type="entry name" value="Argininosuccinate synthetase, chain A, domain 2"/>
    <property type="match status" value="1"/>
</dbReference>
<dbReference type="Gene3D" id="3.40.50.620">
    <property type="entry name" value="HUPs"/>
    <property type="match status" value="1"/>
</dbReference>
<dbReference type="Gene3D" id="1.20.5.470">
    <property type="entry name" value="Single helix bin"/>
    <property type="match status" value="1"/>
</dbReference>
<dbReference type="HAMAP" id="MF_00005">
    <property type="entry name" value="Arg_succ_synth_type1"/>
    <property type="match status" value="1"/>
</dbReference>
<dbReference type="InterPro" id="IPR048268">
    <property type="entry name" value="Arginosuc_syn_C"/>
</dbReference>
<dbReference type="InterPro" id="IPR048267">
    <property type="entry name" value="Arginosuc_syn_N"/>
</dbReference>
<dbReference type="InterPro" id="IPR001518">
    <property type="entry name" value="Arginosuc_synth"/>
</dbReference>
<dbReference type="InterPro" id="IPR018223">
    <property type="entry name" value="Arginosuc_synth_CS"/>
</dbReference>
<dbReference type="InterPro" id="IPR023434">
    <property type="entry name" value="Arginosuc_synth_type_1_subfam"/>
</dbReference>
<dbReference type="InterPro" id="IPR024074">
    <property type="entry name" value="AS_cat/multimer_dom_body"/>
</dbReference>
<dbReference type="InterPro" id="IPR014729">
    <property type="entry name" value="Rossmann-like_a/b/a_fold"/>
</dbReference>
<dbReference type="NCBIfam" id="TIGR00032">
    <property type="entry name" value="argG"/>
    <property type="match status" value="1"/>
</dbReference>
<dbReference type="NCBIfam" id="NF001770">
    <property type="entry name" value="PRK00509.1"/>
    <property type="match status" value="1"/>
</dbReference>
<dbReference type="PANTHER" id="PTHR11587">
    <property type="entry name" value="ARGININOSUCCINATE SYNTHASE"/>
    <property type="match status" value="1"/>
</dbReference>
<dbReference type="PANTHER" id="PTHR11587:SF2">
    <property type="entry name" value="ARGININOSUCCINATE SYNTHASE"/>
    <property type="match status" value="1"/>
</dbReference>
<dbReference type="Pfam" id="PF20979">
    <property type="entry name" value="Arginosuc_syn_C"/>
    <property type="match status" value="1"/>
</dbReference>
<dbReference type="Pfam" id="PF00764">
    <property type="entry name" value="Arginosuc_synth"/>
    <property type="match status" value="1"/>
</dbReference>
<dbReference type="SUPFAM" id="SSF52402">
    <property type="entry name" value="Adenine nucleotide alpha hydrolases-like"/>
    <property type="match status" value="1"/>
</dbReference>
<dbReference type="SUPFAM" id="SSF69864">
    <property type="entry name" value="Argininosuccinate synthetase, C-terminal domain"/>
    <property type="match status" value="1"/>
</dbReference>
<dbReference type="PROSITE" id="PS00564">
    <property type="entry name" value="ARGININOSUCCIN_SYN_1"/>
    <property type="match status" value="1"/>
</dbReference>
<dbReference type="PROSITE" id="PS00565">
    <property type="entry name" value="ARGININOSUCCIN_SYN_2"/>
    <property type="match status" value="1"/>
</dbReference>
<proteinExistence type="inferred from homology"/>
<comment type="catalytic activity">
    <reaction evidence="1">
        <text>L-citrulline + L-aspartate + ATP = 2-(N(omega)-L-arginino)succinate + AMP + diphosphate + H(+)</text>
        <dbReference type="Rhea" id="RHEA:10932"/>
        <dbReference type="ChEBI" id="CHEBI:15378"/>
        <dbReference type="ChEBI" id="CHEBI:29991"/>
        <dbReference type="ChEBI" id="CHEBI:30616"/>
        <dbReference type="ChEBI" id="CHEBI:33019"/>
        <dbReference type="ChEBI" id="CHEBI:57472"/>
        <dbReference type="ChEBI" id="CHEBI:57743"/>
        <dbReference type="ChEBI" id="CHEBI:456215"/>
        <dbReference type="EC" id="6.3.4.5"/>
    </reaction>
</comment>
<comment type="pathway">
    <text evidence="1">Amino-acid biosynthesis; L-arginine biosynthesis; L-arginine from L-ornithine and carbamoyl phosphate: step 2/3.</text>
</comment>
<comment type="subunit">
    <text evidence="1">Homotetramer.</text>
</comment>
<comment type="subcellular location">
    <subcellularLocation>
        <location evidence="1">Cytoplasm</location>
    </subcellularLocation>
</comment>
<comment type="similarity">
    <text evidence="1">Belongs to the argininosuccinate synthase family. Type 1 subfamily.</text>
</comment>
<accession>Q1Q9L2</accession>
<keyword id="KW-0028">Amino-acid biosynthesis</keyword>
<keyword id="KW-0055">Arginine biosynthesis</keyword>
<keyword id="KW-0067">ATP-binding</keyword>
<keyword id="KW-0963">Cytoplasm</keyword>
<keyword id="KW-0436">Ligase</keyword>
<keyword id="KW-0547">Nucleotide-binding</keyword>
<gene>
    <name evidence="1" type="primary">argG</name>
    <name type="ordered locus">Pcryo_1864</name>
</gene>
<organism>
    <name type="scientific">Psychrobacter cryohalolentis (strain ATCC BAA-1226 / DSM 17306 / VKM B-2378 / K5)</name>
    <dbReference type="NCBI Taxonomy" id="335284"/>
    <lineage>
        <taxon>Bacteria</taxon>
        <taxon>Pseudomonadati</taxon>
        <taxon>Pseudomonadota</taxon>
        <taxon>Gammaproteobacteria</taxon>
        <taxon>Moraxellales</taxon>
        <taxon>Moraxellaceae</taxon>
        <taxon>Psychrobacter</taxon>
    </lineage>
</organism>
<name>ASSY_PSYCK</name>